<proteinExistence type="evidence at transcript level"/>
<comment type="subcellular location">
    <subcellularLocation>
        <location evidence="4">Secreted</location>
    </subcellularLocation>
</comment>
<comment type="tissue specificity">
    <text evidence="4">Expressed by the venom gland.</text>
</comment>
<comment type="PTM">
    <text evidence="3">Contains 8 disulfide bonds.</text>
</comment>
<comment type="similarity">
    <text evidence="3">Belongs to the scoloptoxin-11 family.</text>
</comment>
<comment type="online information" name="National Center for Biotechnology Information (NCBI)">
    <link uri="https://www.ncbi.nlm.nih.gov/nuccore/GASK01000038"/>
</comment>
<name>TXB3A_SCOAL</name>
<accession>P0DPZ7</accession>
<organism>
    <name type="scientific">Scolopendra alternans</name>
    <name type="common">Florida Keys giant centipede</name>
    <dbReference type="NCBI Taxonomy" id="1329349"/>
    <lineage>
        <taxon>Eukaryota</taxon>
        <taxon>Metazoa</taxon>
        <taxon>Ecdysozoa</taxon>
        <taxon>Arthropoda</taxon>
        <taxon>Myriapoda</taxon>
        <taxon>Chilopoda</taxon>
        <taxon>Pleurostigmophora</taxon>
        <taxon>Scolopendromorpha</taxon>
        <taxon>Scolopendridae</taxon>
        <taxon>Scolopendra</taxon>
    </lineage>
</organism>
<reference key="1">
    <citation type="journal article" date="2014" name="Mol. Biol. Evol.">
        <title>Clawing through evolution: toxin diversification and convergence in the ancient lineage Chilopoda (centipedes).</title>
        <authorList>
            <person name="Undheim E.A."/>
            <person name="Jones A."/>
            <person name="Clauser K.R."/>
            <person name="Holland J.W."/>
            <person name="Pineda S.S."/>
            <person name="King G.F."/>
            <person name="Fry B.G."/>
        </authorList>
    </citation>
    <scope>NUCLEOTIDE SEQUENCE [MRNA]</scope>
    <scope>NOMENCLATURE</scope>
    <source>
        <tissue>Venom gland</tissue>
    </source>
</reference>
<evidence type="ECO:0000255" key="1"/>
<evidence type="ECO:0000303" key="2">
    <source>
    </source>
</evidence>
<evidence type="ECO:0000305" key="3"/>
<evidence type="ECO:0000305" key="4">
    <source>
    </source>
</evidence>
<dbReference type="SMR" id="P0DPZ7"/>
<dbReference type="GO" id="GO:0005576">
    <property type="term" value="C:extracellular region"/>
    <property type="evidence" value="ECO:0007669"/>
    <property type="project" value="UniProtKB-SubCell"/>
</dbReference>
<dbReference type="GO" id="GO:0090729">
    <property type="term" value="F:toxin activity"/>
    <property type="evidence" value="ECO:0007669"/>
    <property type="project" value="UniProtKB-KW"/>
</dbReference>
<dbReference type="Gene3D" id="2.20.20.160">
    <property type="match status" value="2"/>
</dbReference>
<sequence>MFQFCLLILLLAPGRFFSALGKPQETLTVENREGSDSKAIPTCREASFCAFLQINPIDSNLDVLPTCTCTGGTTCSHSWDPNDGKSITEGHRQFKFCSNVLDTIKHECSAEEKALTGIFEEDKVTKIHLAYYGFLHCICPDHSDYPENSYNETETVEGDKKIITEYYHCEQFKTCKSDDTCHALAIGETKKIYYKDCNCPEGQTCPFELNSAYKTEYKETTDKFTTYSMRCQ</sequence>
<feature type="signal peptide" evidence="1">
    <location>
        <begin position="1"/>
        <end position="21"/>
    </location>
</feature>
<feature type="chain" id="PRO_0000446770" description="U-scoloptoxin(11)-Sa3a" evidence="3">
    <location>
        <begin position="22"/>
        <end position="232"/>
    </location>
</feature>
<protein>
    <recommendedName>
        <fullName evidence="2">U-scoloptoxin(11)-Sa3a</fullName>
        <shortName evidence="2">U-SLPTX(11)-Sa3a</shortName>
    </recommendedName>
</protein>
<keyword id="KW-1015">Disulfide bond</keyword>
<keyword id="KW-0964">Secreted</keyword>
<keyword id="KW-0732">Signal</keyword>
<keyword id="KW-0800">Toxin</keyword>